<feature type="chain" id="PRO_0000244331" description="Ubiquitin domain-containing protein 2">
    <location>
        <begin position="1"/>
        <end position="234"/>
    </location>
</feature>
<feature type="domain" description="Ubiquitin-like" evidence="2">
    <location>
        <begin position="152"/>
        <end position="227"/>
    </location>
</feature>
<feature type="region of interest" description="Disordered" evidence="3">
    <location>
        <begin position="1"/>
        <end position="46"/>
    </location>
</feature>
<feature type="compositionally biased region" description="Polar residues" evidence="3">
    <location>
        <begin position="9"/>
        <end position="21"/>
    </location>
</feature>
<feature type="compositionally biased region" description="Basic and acidic residues" evidence="3">
    <location>
        <begin position="32"/>
        <end position="41"/>
    </location>
</feature>
<sequence length="234" mass="26244">MGGCVGAQHDSSGSLNENSEGTGVALGRNQPLKKEKPKWKSDYPMTDGQLRSKRDEFWDTAPAFEGRKEIWDALKAAAHAFESNDHELAQAIIDGANITLPHGALTECYDELGNRYQLPVYCLAPPINMIEEKSDIETLDIPEPPPNSGYESQLRLRLSTGKDLKLVVRSTDTVYHMKRRLHAAEGVEPASQRWFFSGRPLTDKMRLEELKIPKDYVVQVIMSQPLQNPTPVEN</sequence>
<evidence type="ECO:0000250" key="1"/>
<evidence type="ECO:0000255" key="2">
    <source>
        <dbReference type="PROSITE-ProRule" id="PRU00214"/>
    </source>
</evidence>
<evidence type="ECO:0000256" key="3">
    <source>
        <dbReference type="SAM" id="MobiDB-lite"/>
    </source>
</evidence>
<name>UBTD2_BOVIN</name>
<comment type="subcellular location">
    <subcellularLocation>
        <location evidence="1">Cytoplasm</location>
    </subcellularLocation>
</comment>
<keyword id="KW-0963">Cytoplasm</keyword>
<keyword id="KW-1185">Reference proteome</keyword>
<protein>
    <recommendedName>
        <fullName>Ubiquitin domain-containing protein 2</fullName>
    </recommendedName>
</protein>
<dbReference type="EMBL" id="BT020626">
    <property type="protein sequence ID" value="AAX08643.1"/>
    <property type="molecule type" value="mRNA"/>
</dbReference>
<dbReference type="RefSeq" id="NP_001015679.1">
    <property type="nucleotide sequence ID" value="NM_001015679.1"/>
</dbReference>
<dbReference type="SMR" id="Q5EAE3"/>
<dbReference type="FunCoup" id="Q5EAE3">
    <property type="interactions" value="2115"/>
</dbReference>
<dbReference type="IntAct" id="Q5EAE3">
    <property type="interactions" value="1"/>
</dbReference>
<dbReference type="STRING" id="9913.ENSBTAP00000046032"/>
<dbReference type="PaxDb" id="9913-ENSBTAP00000046032"/>
<dbReference type="GeneID" id="541134"/>
<dbReference type="KEGG" id="bta:541134"/>
<dbReference type="CTD" id="92181"/>
<dbReference type="VEuPathDB" id="HostDB:ENSBTAG00000034659"/>
<dbReference type="eggNOG" id="KOG0013">
    <property type="taxonomic scope" value="Eukaryota"/>
</dbReference>
<dbReference type="HOGENOM" id="CLU_070348_0_0_1"/>
<dbReference type="InParanoid" id="Q5EAE3"/>
<dbReference type="OMA" id="GTGGECQ"/>
<dbReference type="OrthoDB" id="1640476at2759"/>
<dbReference type="TreeFam" id="TF323925"/>
<dbReference type="Proteomes" id="UP000009136">
    <property type="component" value="Chromosome 20"/>
</dbReference>
<dbReference type="Bgee" id="ENSBTAG00000034659">
    <property type="expression patterns" value="Expressed in semen and 110 other cell types or tissues"/>
</dbReference>
<dbReference type="GO" id="GO:0005737">
    <property type="term" value="C:cytoplasm"/>
    <property type="evidence" value="ECO:0007669"/>
    <property type="project" value="UniProtKB-SubCell"/>
</dbReference>
<dbReference type="CDD" id="cd17121">
    <property type="entry name" value="Ubl_UBTD2"/>
    <property type="match status" value="1"/>
</dbReference>
<dbReference type="Gene3D" id="3.10.20.90">
    <property type="entry name" value="Phosphatidylinositol 3-kinase Catalytic Subunit, Chain A, domain 1"/>
    <property type="match status" value="1"/>
</dbReference>
<dbReference type="Gene3D" id="1.20.225.20">
    <property type="entry name" value="Ub domain-containing protein, DC-UbP/UBTD2, N-terminal domain"/>
    <property type="match status" value="1"/>
</dbReference>
<dbReference type="InterPro" id="IPR032752">
    <property type="entry name" value="DC-UbP/UBTD2_N"/>
</dbReference>
<dbReference type="InterPro" id="IPR038169">
    <property type="entry name" value="DC-UbP/UBTD2_N_sf"/>
</dbReference>
<dbReference type="InterPro" id="IPR000626">
    <property type="entry name" value="Ubiquitin-like_dom"/>
</dbReference>
<dbReference type="InterPro" id="IPR029071">
    <property type="entry name" value="Ubiquitin-like_domsf"/>
</dbReference>
<dbReference type="InterPro" id="IPR039869">
    <property type="entry name" value="UBTD1/2"/>
</dbReference>
<dbReference type="PANTHER" id="PTHR13609">
    <property type="entry name" value="UBIQUITIN DOMAIN CONTAINING 1 PROTEIN-RELATED"/>
    <property type="match status" value="1"/>
</dbReference>
<dbReference type="Pfam" id="PF16455">
    <property type="entry name" value="UBD"/>
    <property type="match status" value="1"/>
</dbReference>
<dbReference type="Pfam" id="PF00240">
    <property type="entry name" value="ubiquitin"/>
    <property type="match status" value="1"/>
</dbReference>
<dbReference type="SUPFAM" id="SSF54236">
    <property type="entry name" value="Ubiquitin-like"/>
    <property type="match status" value="1"/>
</dbReference>
<dbReference type="PROSITE" id="PS50053">
    <property type="entry name" value="UBIQUITIN_2"/>
    <property type="match status" value="1"/>
</dbReference>
<gene>
    <name type="primary">UBTD2</name>
</gene>
<organism>
    <name type="scientific">Bos taurus</name>
    <name type="common">Bovine</name>
    <dbReference type="NCBI Taxonomy" id="9913"/>
    <lineage>
        <taxon>Eukaryota</taxon>
        <taxon>Metazoa</taxon>
        <taxon>Chordata</taxon>
        <taxon>Craniata</taxon>
        <taxon>Vertebrata</taxon>
        <taxon>Euteleostomi</taxon>
        <taxon>Mammalia</taxon>
        <taxon>Eutheria</taxon>
        <taxon>Laurasiatheria</taxon>
        <taxon>Artiodactyla</taxon>
        <taxon>Ruminantia</taxon>
        <taxon>Pecora</taxon>
        <taxon>Bovidae</taxon>
        <taxon>Bovinae</taxon>
        <taxon>Bos</taxon>
    </lineage>
</organism>
<accession>Q5EAE3</accession>
<proteinExistence type="evidence at transcript level"/>
<reference key="1">
    <citation type="submission" date="2005-02" db="EMBL/GenBank/DDBJ databases">
        <title>Sequencing and analysis of Bos taurus full-length insert cDNA clones.</title>
        <authorList>
            <person name="Harhay G.P."/>
            <person name="Sonstegard T.S."/>
            <person name="Clawson M.L."/>
            <person name="Heaton M.P."/>
            <person name="Keele J.W."/>
            <person name="Snelling W.M."/>
            <person name="Weidmann R.T."/>
            <person name="Smith T.P.L."/>
        </authorList>
    </citation>
    <scope>NUCLEOTIDE SEQUENCE [LARGE SCALE MRNA]</scope>
</reference>